<feature type="chain" id="PRO_0000297990" description="S-ribosylhomocysteine lyase">
    <location>
        <begin position="1"/>
        <end position="151"/>
    </location>
</feature>
<feature type="binding site" evidence="1">
    <location>
        <position position="54"/>
    </location>
    <ligand>
        <name>Fe cation</name>
        <dbReference type="ChEBI" id="CHEBI:24875"/>
    </ligand>
</feature>
<feature type="binding site" evidence="1">
    <location>
        <position position="58"/>
    </location>
    <ligand>
        <name>Fe cation</name>
        <dbReference type="ChEBI" id="CHEBI:24875"/>
    </ligand>
</feature>
<feature type="binding site" evidence="1">
    <location>
        <position position="121"/>
    </location>
    <ligand>
        <name>Fe cation</name>
        <dbReference type="ChEBI" id="CHEBI:24875"/>
    </ligand>
</feature>
<accession>Q181K1</accession>
<reference key="1">
    <citation type="journal article" date="2006" name="Nat. Genet.">
        <title>The multidrug-resistant human pathogen Clostridium difficile has a highly mobile, mosaic genome.</title>
        <authorList>
            <person name="Sebaihia M."/>
            <person name="Wren B.W."/>
            <person name="Mullany P."/>
            <person name="Fairweather N.F."/>
            <person name="Minton N."/>
            <person name="Stabler R."/>
            <person name="Thomson N.R."/>
            <person name="Roberts A.P."/>
            <person name="Cerdeno-Tarraga A.M."/>
            <person name="Wang H."/>
            <person name="Holden M.T.G."/>
            <person name="Wright A."/>
            <person name="Churcher C."/>
            <person name="Quail M.A."/>
            <person name="Baker S."/>
            <person name="Bason N."/>
            <person name="Brooks K."/>
            <person name="Chillingworth T."/>
            <person name="Cronin A."/>
            <person name="Davis P."/>
            <person name="Dowd L."/>
            <person name="Fraser A."/>
            <person name="Feltwell T."/>
            <person name="Hance Z."/>
            <person name="Holroyd S."/>
            <person name="Jagels K."/>
            <person name="Moule S."/>
            <person name="Mungall K."/>
            <person name="Price C."/>
            <person name="Rabbinowitsch E."/>
            <person name="Sharp S."/>
            <person name="Simmonds M."/>
            <person name="Stevens K."/>
            <person name="Unwin L."/>
            <person name="Whithead S."/>
            <person name="Dupuy B."/>
            <person name="Dougan G."/>
            <person name="Barrell B."/>
            <person name="Parkhill J."/>
        </authorList>
    </citation>
    <scope>NUCLEOTIDE SEQUENCE [LARGE SCALE GENOMIC DNA]</scope>
    <source>
        <strain>630</strain>
    </source>
</reference>
<dbReference type="EC" id="4.4.1.21" evidence="1"/>
<dbReference type="EMBL" id="AM180355">
    <property type="protein sequence ID" value="CAJ70505.1"/>
    <property type="molecule type" value="Genomic_DNA"/>
</dbReference>
<dbReference type="RefSeq" id="WP_003422312.1">
    <property type="nucleotide sequence ID" value="NZ_JAUPES010000007.1"/>
</dbReference>
<dbReference type="RefSeq" id="YP_001090122.1">
    <property type="nucleotide sequence ID" value="NC_009089.1"/>
</dbReference>
<dbReference type="SMR" id="Q181K1"/>
<dbReference type="STRING" id="272563.CD630_35980"/>
<dbReference type="EnsemblBacteria" id="CAJ70505">
    <property type="protein sequence ID" value="CAJ70505"/>
    <property type="gene ID" value="CD630_35980"/>
</dbReference>
<dbReference type="KEGG" id="cdf:CD630_35980"/>
<dbReference type="KEGG" id="pdc:CDIF630_03920"/>
<dbReference type="PATRIC" id="fig|272563.120.peg.3804"/>
<dbReference type="eggNOG" id="COG1854">
    <property type="taxonomic scope" value="Bacteria"/>
</dbReference>
<dbReference type="OrthoDB" id="9788129at2"/>
<dbReference type="PhylomeDB" id="Q181K1"/>
<dbReference type="BioCyc" id="PDIF272563:G12WB-3785-MONOMER"/>
<dbReference type="Proteomes" id="UP000001978">
    <property type="component" value="Chromosome"/>
</dbReference>
<dbReference type="GO" id="GO:0005506">
    <property type="term" value="F:iron ion binding"/>
    <property type="evidence" value="ECO:0007669"/>
    <property type="project" value="InterPro"/>
</dbReference>
<dbReference type="GO" id="GO:0043768">
    <property type="term" value="F:S-ribosylhomocysteine lyase activity"/>
    <property type="evidence" value="ECO:0007669"/>
    <property type="project" value="UniProtKB-UniRule"/>
</dbReference>
<dbReference type="GO" id="GO:0009372">
    <property type="term" value="P:quorum sensing"/>
    <property type="evidence" value="ECO:0007669"/>
    <property type="project" value="UniProtKB-UniRule"/>
</dbReference>
<dbReference type="Gene3D" id="3.30.1360.80">
    <property type="entry name" value="S-ribosylhomocysteinase (LuxS)"/>
    <property type="match status" value="1"/>
</dbReference>
<dbReference type="HAMAP" id="MF_00091">
    <property type="entry name" value="LuxS"/>
    <property type="match status" value="1"/>
</dbReference>
<dbReference type="InterPro" id="IPR037005">
    <property type="entry name" value="LuxS_sf"/>
</dbReference>
<dbReference type="InterPro" id="IPR011249">
    <property type="entry name" value="Metalloenz_LuxS/M16"/>
</dbReference>
<dbReference type="InterPro" id="IPR003815">
    <property type="entry name" value="S-ribosylhomocysteinase"/>
</dbReference>
<dbReference type="NCBIfam" id="NF002606">
    <property type="entry name" value="PRK02260.2-4"/>
    <property type="match status" value="1"/>
</dbReference>
<dbReference type="PANTHER" id="PTHR35799">
    <property type="entry name" value="S-RIBOSYLHOMOCYSTEINE LYASE"/>
    <property type="match status" value="1"/>
</dbReference>
<dbReference type="PANTHER" id="PTHR35799:SF1">
    <property type="entry name" value="S-RIBOSYLHOMOCYSTEINE LYASE"/>
    <property type="match status" value="1"/>
</dbReference>
<dbReference type="Pfam" id="PF02664">
    <property type="entry name" value="LuxS"/>
    <property type="match status" value="1"/>
</dbReference>
<dbReference type="PIRSF" id="PIRSF006160">
    <property type="entry name" value="AI2"/>
    <property type="match status" value="1"/>
</dbReference>
<dbReference type="PRINTS" id="PR01487">
    <property type="entry name" value="LUXSPROTEIN"/>
</dbReference>
<dbReference type="SUPFAM" id="SSF63411">
    <property type="entry name" value="LuxS/MPP-like metallohydrolase"/>
    <property type="match status" value="1"/>
</dbReference>
<protein>
    <recommendedName>
        <fullName evidence="1">S-ribosylhomocysteine lyase</fullName>
        <ecNumber evidence="1">4.4.1.21</ecNumber>
    </recommendedName>
    <alternativeName>
        <fullName evidence="1">AI-2 synthesis protein</fullName>
    </alternativeName>
    <alternativeName>
        <fullName evidence="1">Autoinducer-2 production protein LuxS</fullName>
    </alternativeName>
</protein>
<keyword id="KW-0071">Autoinducer synthesis</keyword>
<keyword id="KW-0408">Iron</keyword>
<keyword id="KW-0456">Lyase</keyword>
<keyword id="KW-0479">Metal-binding</keyword>
<keyword id="KW-0673">Quorum sensing</keyword>
<keyword id="KW-1185">Reference proteome</keyword>
<comment type="function">
    <text evidence="1">Involved in the synthesis of autoinducer 2 (AI-2) which is secreted by bacteria and is used to communicate both the cell density and the metabolic potential of the environment. The regulation of gene expression in response to changes in cell density is called quorum sensing. Catalyzes the transformation of S-ribosylhomocysteine (RHC) to homocysteine (HC) and 4,5-dihydroxy-2,3-pentadione (DPD).</text>
</comment>
<comment type="catalytic activity">
    <reaction evidence="1">
        <text>S-(5-deoxy-D-ribos-5-yl)-L-homocysteine = (S)-4,5-dihydroxypentane-2,3-dione + L-homocysteine</text>
        <dbReference type="Rhea" id="RHEA:17753"/>
        <dbReference type="ChEBI" id="CHEBI:29484"/>
        <dbReference type="ChEBI" id="CHEBI:58195"/>
        <dbReference type="ChEBI" id="CHEBI:58199"/>
        <dbReference type="EC" id="4.4.1.21"/>
    </reaction>
</comment>
<comment type="cofactor">
    <cofactor evidence="1">
        <name>Fe cation</name>
        <dbReference type="ChEBI" id="CHEBI:24875"/>
    </cofactor>
    <text evidence="1">Binds 1 Fe cation per subunit.</text>
</comment>
<comment type="subunit">
    <text evidence="1">Homodimer.</text>
</comment>
<comment type="similarity">
    <text evidence="1">Belongs to the LuxS family.</text>
</comment>
<sequence>MEKVESFKLDHTKVKAPFVRKCSVLDGVKGDKVTKFDLRFLQPNVESFGTAAMHGLEHLLATYLRDTLDGVIDLSPMGCRTGFYLILWGDVDAKTVKIGLEEALKKVLESDKMPAATAIECGNYRDLSLFGAKEYAKDVLDKGFSLNIYGE</sequence>
<proteinExistence type="inferred from homology"/>
<organism>
    <name type="scientific">Clostridioides difficile (strain 630)</name>
    <name type="common">Peptoclostridium difficile</name>
    <dbReference type="NCBI Taxonomy" id="272563"/>
    <lineage>
        <taxon>Bacteria</taxon>
        <taxon>Bacillati</taxon>
        <taxon>Bacillota</taxon>
        <taxon>Clostridia</taxon>
        <taxon>Peptostreptococcales</taxon>
        <taxon>Peptostreptococcaceae</taxon>
        <taxon>Clostridioides</taxon>
    </lineage>
</organism>
<name>LUXS_CLOD6</name>
<gene>
    <name evidence="1" type="primary">luxS</name>
    <name type="ordered locus">CD630_35980</name>
</gene>
<evidence type="ECO:0000255" key="1">
    <source>
        <dbReference type="HAMAP-Rule" id="MF_00091"/>
    </source>
</evidence>